<dbReference type="EC" id="5.3.1.17" evidence="1"/>
<dbReference type="EMBL" id="CP000747">
    <property type="protein sequence ID" value="ACG78860.1"/>
    <property type="molecule type" value="Genomic_DNA"/>
</dbReference>
<dbReference type="SMR" id="B4RGF4"/>
<dbReference type="STRING" id="450851.PHZ_c2451"/>
<dbReference type="KEGG" id="pzu:PHZ_c2451"/>
<dbReference type="eggNOG" id="COG3717">
    <property type="taxonomic scope" value="Bacteria"/>
</dbReference>
<dbReference type="HOGENOM" id="CLU_062609_0_0_5"/>
<dbReference type="UniPathway" id="UPA00545">
    <property type="reaction ID" value="UER00826"/>
</dbReference>
<dbReference type="Proteomes" id="UP000001868">
    <property type="component" value="Chromosome"/>
</dbReference>
<dbReference type="GO" id="GO:0008697">
    <property type="term" value="F:4-deoxy-L-threo-5-hexosulose-uronate ketol-isomerase activity"/>
    <property type="evidence" value="ECO:0007669"/>
    <property type="project" value="UniProtKB-UniRule"/>
</dbReference>
<dbReference type="GO" id="GO:0008270">
    <property type="term" value="F:zinc ion binding"/>
    <property type="evidence" value="ECO:0007669"/>
    <property type="project" value="UniProtKB-UniRule"/>
</dbReference>
<dbReference type="GO" id="GO:0019698">
    <property type="term" value="P:D-galacturonate catabolic process"/>
    <property type="evidence" value="ECO:0007669"/>
    <property type="project" value="TreeGrafter"/>
</dbReference>
<dbReference type="GO" id="GO:0042840">
    <property type="term" value="P:D-glucuronate catabolic process"/>
    <property type="evidence" value="ECO:0007669"/>
    <property type="project" value="TreeGrafter"/>
</dbReference>
<dbReference type="GO" id="GO:0045490">
    <property type="term" value="P:pectin catabolic process"/>
    <property type="evidence" value="ECO:0007669"/>
    <property type="project" value="UniProtKB-UniRule"/>
</dbReference>
<dbReference type="CDD" id="cd20491">
    <property type="entry name" value="cupin_KduI_C"/>
    <property type="match status" value="1"/>
</dbReference>
<dbReference type="CDD" id="cd20294">
    <property type="entry name" value="cupin_KduI_N"/>
    <property type="match status" value="1"/>
</dbReference>
<dbReference type="Gene3D" id="2.60.120.10">
    <property type="entry name" value="Jelly Rolls"/>
    <property type="match status" value="1"/>
</dbReference>
<dbReference type="Gene3D" id="2.60.120.520">
    <property type="entry name" value="pectin degrading enzyme 5-keto 4- deoxyuronate isomerase, domain 1"/>
    <property type="match status" value="1"/>
</dbReference>
<dbReference type="HAMAP" id="MF_00687">
    <property type="entry name" value="KduI"/>
    <property type="match status" value="1"/>
</dbReference>
<dbReference type="InterPro" id="IPR007045">
    <property type="entry name" value="KduI"/>
</dbReference>
<dbReference type="InterPro" id="IPR021120">
    <property type="entry name" value="KduI/IolB_isomerase"/>
</dbReference>
<dbReference type="InterPro" id="IPR027449">
    <property type="entry name" value="KduI_N"/>
</dbReference>
<dbReference type="InterPro" id="IPR014710">
    <property type="entry name" value="RmlC-like_jellyroll"/>
</dbReference>
<dbReference type="InterPro" id="IPR011051">
    <property type="entry name" value="RmlC_Cupin_sf"/>
</dbReference>
<dbReference type="NCBIfam" id="NF002091">
    <property type="entry name" value="PRK00924.1"/>
    <property type="match status" value="1"/>
</dbReference>
<dbReference type="PANTHER" id="PTHR38461">
    <property type="entry name" value="4-DEOXY-L-THREO-5-HEXOSULOSE-URONATE KETOL-ISOMERASE"/>
    <property type="match status" value="1"/>
</dbReference>
<dbReference type="PANTHER" id="PTHR38461:SF1">
    <property type="entry name" value="4-DEOXY-L-THREO-5-HEXOSULOSE-URONATE KETOL-ISOMERASE"/>
    <property type="match status" value="1"/>
</dbReference>
<dbReference type="Pfam" id="PF04962">
    <property type="entry name" value="KduI"/>
    <property type="match status" value="1"/>
</dbReference>
<dbReference type="PIRSF" id="PIRSF006625">
    <property type="entry name" value="KduI"/>
    <property type="match status" value="1"/>
</dbReference>
<dbReference type="SUPFAM" id="SSF51182">
    <property type="entry name" value="RmlC-like cupins"/>
    <property type="match status" value="1"/>
</dbReference>
<name>KDUI_PHEZH</name>
<sequence>MYVFKRIYHATHPDMMEGVDNETLRQRYLIDGLFQPGQIVLNYTHYERFVIGGAAPHGGAVRLPDQTEPESAAGHPFLERRELGVVNVADVAGTVTVDGQAYALAPKDCLYVPMGTKDVTFEGDGARFYLVSTPAHARFETRHLSIADAVPLERGGLETSNERTIYQLVVPATCKSAQLLMGLTILKTGSVWNTMPPHLHDRRSEVYFYFDLGKDDRVFHFMGEPDKARHIIMANEEAVVSPPWSIHMGSGTSNYAFIWAMGGENLDYTDMRVLDICQLK</sequence>
<proteinExistence type="inferred from homology"/>
<reference key="1">
    <citation type="journal article" date="2008" name="BMC Genomics">
        <title>Complete genome of Phenylobacterium zucineum - a novel facultative intracellular bacterium isolated from human erythroleukemia cell line K562.</title>
        <authorList>
            <person name="Luo Y."/>
            <person name="Xu X."/>
            <person name="Ding Z."/>
            <person name="Liu Z."/>
            <person name="Zhang B."/>
            <person name="Yan Z."/>
            <person name="Sun J."/>
            <person name="Hu S."/>
            <person name="Hu X."/>
        </authorList>
    </citation>
    <scope>NUCLEOTIDE SEQUENCE [LARGE SCALE GENOMIC DNA]</scope>
    <source>
        <strain>HLK1</strain>
    </source>
</reference>
<organism>
    <name type="scientific">Phenylobacterium zucineum (strain HLK1)</name>
    <dbReference type="NCBI Taxonomy" id="450851"/>
    <lineage>
        <taxon>Bacteria</taxon>
        <taxon>Pseudomonadati</taxon>
        <taxon>Pseudomonadota</taxon>
        <taxon>Alphaproteobacteria</taxon>
        <taxon>Caulobacterales</taxon>
        <taxon>Caulobacteraceae</taxon>
        <taxon>Phenylobacterium</taxon>
    </lineage>
</organism>
<gene>
    <name evidence="1" type="primary">kduI</name>
    <name type="ordered locus">PHZ_c2451</name>
</gene>
<feature type="chain" id="PRO_1000131887" description="4-deoxy-L-threo-5-hexosulose-uronate ketol-isomerase">
    <location>
        <begin position="1"/>
        <end position="280"/>
    </location>
</feature>
<feature type="binding site" evidence="1">
    <location>
        <position position="198"/>
    </location>
    <ligand>
        <name>Zn(2+)</name>
        <dbReference type="ChEBI" id="CHEBI:29105"/>
    </ligand>
</feature>
<feature type="binding site" evidence="1">
    <location>
        <position position="200"/>
    </location>
    <ligand>
        <name>Zn(2+)</name>
        <dbReference type="ChEBI" id="CHEBI:29105"/>
    </ligand>
</feature>
<feature type="binding site" evidence="1">
    <location>
        <position position="205"/>
    </location>
    <ligand>
        <name>Zn(2+)</name>
        <dbReference type="ChEBI" id="CHEBI:29105"/>
    </ligand>
</feature>
<feature type="binding site" evidence="1">
    <location>
        <position position="247"/>
    </location>
    <ligand>
        <name>Zn(2+)</name>
        <dbReference type="ChEBI" id="CHEBI:29105"/>
    </ligand>
</feature>
<evidence type="ECO:0000255" key="1">
    <source>
        <dbReference type="HAMAP-Rule" id="MF_00687"/>
    </source>
</evidence>
<accession>B4RGF4</accession>
<comment type="function">
    <text evidence="1">Catalyzes the isomerization of 5-dehydro-4-deoxy-D-glucuronate to 3-deoxy-D-glycero-2,5-hexodiulosonate.</text>
</comment>
<comment type="catalytic activity">
    <reaction evidence="1">
        <text>5-dehydro-4-deoxy-D-glucuronate = 3-deoxy-D-glycero-2,5-hexodiulosonate</text>
        <dbReference type="Rhea" id="RHEA:23896"/>
        <dbReference type="ChEBI" id="CHEBI:17117"/>
        <dbReference type="ChEBI" id="CHEBI:29071"/>
        <dbReference type="EC" id="5.3.1.17"/>
    </reaction>
</comment>
<comment type="cofactor">
    <cofactor evidence="1">
        <name>Zn(2+)</name>
        <dbReference type="ChEBI" id="CHEBI:29105"/>
    </cofactor>
    <text evidence="1">Binds 1 zinc ion per subunit.</text>
</comment>
<comment type="pathway">
    <text evidence="1">Glycan metabolism; pectin degradation; 2-dehydro-3-deoxy-D-gluconate from pectin: step 4/5.</text>
</comment>
<comment type="similarity">
    <text evidence="1">Belongs to the KduI family.</text>
</comment>
<protein>
    <recommendedName>
        <fullName evidence="1">4-deoxy-L-threo-5-hexosulose-uronate ketol-isomerase</fullName>
        <ecNumber evidence="1">5.3.1.17</ecNumber>
    </recommendedName>
    <alternativeName>
        <fullName evidence="1">5-keto-4-deoxyuronate isomerase</fullName>
    </alternativeName>
    <alternativeName>
        <fullName evidence="1">DKI isomerase</fullName>
    </alternativeName>
</protein>
<keyword id="KW-0413">Isomerase</keyword>
<keyword id="KW-0479">Metal-binding</keyword>
<keyword id="KW-1185">Reference proteome</keyword>
<keyword id="KW-0862">Zinc</keyword>